<feature type="chain" id="PRO_1000137959" description="UDP-4-amino-4-deoxy-L-arabinose--oxoglutarate aminotransferase">
    <location>
        <begin position="1"/>
        <end position="379"/>
    </location>
</feature>
<feature type="modified residue" description="N6-(pyridoxal phosphate)lysine" evidence="1">
    <location>
        <position position="182"/>
    </location>
</feature>
<name>ARNB_KLEP3</name>
<protein>
    <recommendedName>
        <fullName evidence="1">UDP-4-amino-4-deoxy-L-arabinose--oxoglutarate aminotransferase</fullName>
        <ecNumber evidence="1">2.6.1.87</ecNumber>
    </recommendedName>
    <alternativeName>
        <fullName evidence="1">UDP-(beta-L-threo-pentapyranosyl-4''-ulose diphosphate) aminotransferase</fullName>
        <shortName evidence="1">UDP-Ara4O aminotransferase</shortName>
    </alternativeName>
    <alternativeName>
        <fullName evidence="1">UDP-4-amino-4-deoxy-L-arabinose aminotransferase</fullName>
    </alternativeName>
</protein>
<gene>
    <name evidence="1" type="primary">arnB</name>
    <name type="ordered locus">KPK_0266</name>
</gene>
<comment type="function">
    <text evidence="1">Catalyzes the conversion of UDP-4-keto-arabinose (UDP-Ara4O) to UDP-4-amino-4-deoxy-L-arabinose (UDP-L-Ara4N). The modified arabinose is attached to lipid A and is required for resistance to polymyxin and cationic antimicrobial peptides.</text>
</comment>
<comment type="catalytic activity">
    <reaction evidence="1">
        <text>UDP-4-amino-4-deoxy-beta-L-arabinose + 2-oxoglutarate = UDP-beta-L-threo-pentopyranos-4-ulose + L-glutamate</text>
        <dbReference type="Rhea" id="RHEA:24710"/>
        <dbReference type="ChEBI" id="CHEBI:16810"/>
        <dbReference type="ChEBI" id="CHEBI:29985"/>
        <dbReference type="ChEBI" id="CHEBI:58708"/>
        <dbReference type="ChEBI" id="CHEBI:58710"/>
        <dbReference type="EC" id="2.6.1.87"/>
    </reaction>
</comment>
<comment type="cofactor">
    <cofactor evidence="1">
        <name>pyridoxal 5'-phosphate</name>
        <dbReference type="ChEBI" id="CHEBI:597326"/>
    </cofactor>
</comment>
<comment type="pathway">
    <text evidence="1">Nucleotide-sugar biosynthesis; UDP-4-deoxy-4-formamido-beta-L-arabinose biosynthesis; UDP-4-deoxy-4-formamido-beta-L-arabinose from UDP-alpha-D-glucuronate: step 2/3.</text>
</comment>
<comment type="pathway">
    <text evidence="1">Bacterial outer membrane biogenesis; lipopolysaccharide biosynthesis.</text>
</comment>
<comment type="subunit">
    <text evidence="1">Homodimer.</text>
</comment>
<comment type="similarity">
    <text evidence="1">Belongs to the DegT/DnrJ/EryC1 family. ArnB subfamily.</text>
</comment>
<organism>
    <name type="scientific">Klebsiella pneumoniae (strain 342)</name>
    <dbReference type="NCBI Taxonomy" id="507522"/>
    <lineage>
        <taxon>Bacteria</taxon>
        <taxon>Pseudomonadati</taxon>
        <taxon>Pseudomonadota</taxon>
        <taxon>Gammaproteobacteria</taxon>
        <taxon>Enterobacterales</taxon>
        <taxon>Enterobacteriaceae</taxon>
        <taxon>Klebsiella/Raoultella group</taxon>
        <taxon>Klebsiella</taxon>
        <taxon>Klebsiella pneumoniae complex</taxon>
    </lineage>
</organism>
<keyword id="KW-0032">Aminotransferase</keyword>
<keyword id="KW-0046">Antibiotic resistance</keyword>
<keyword id="KW-0441">Lipid A biosynthesis</keyword>
<keyword id="KW-0444">Lipid biosynthesis</keyword>
<keyword id="KW-0443">Lipid metabolism</keyword>
<keyword id="KW-0448">Lipopolysaccharide biosynthesis</keyword>
<keyword id="KW-0663">Pyridoxal phosphate</keyword>
<keyword id="KW-0808">Transferase</keyword>
<dbReference type="EC" id="2.6.1.87" evidence="1"/>
<dbReference type="EMBL" id="CP000964">
    <property type="protein sequence ID" value="ACI09401.1"/>
    <property type="molecule type" value="Genomic_DNA"/>
</dbReference>
<dbReference type="SMR" id="B5XTK7"/>
<dbReference type="KEGG" id="kpe:KPK_0266"/>
<dbReference type="HOGENOM" id="CLU_033332_0_3_6"/>
<dbReference type="UniPathway" id="UPA00030"/>
<dbReference type="UniPathway" id="UPA00032">
    <property type="reaction ID" value="UER00493"/>
</dbReference>
<dbReference type="Proteomes" id="UP000001734">
    <property type="component" value="Chromosome"/>
</dbReference>
<dbReference type="GO" id="GO:0016020">
    <property type="term" value="C:membrane"/>
    <property type="evidence" value="ECO:0007669"/>
    <property type="project" value="GOC"/>
</dbReference>
<dbReference type="GO" id="GO:0030170">
    <property type="term" value="F:pyridoxal phosphate binding"/>
    <property type="evidence" value="ECO:0007669"/>
    <property type="project" value="TreeGrafter"/>
</dbReference>
<dbReference type="GO" id="GO:0099620">
    <property type="term" value="F:UDP-4-amino-4-deoxy-L-arabinose aminotransferase"/>
    <property type="evidence" value="ECO:0007669"/>
    <property type="project" value="UniProtKB-EC"/>
</dbReference>
<dbReference type="GO" id="GO:0009245">
    <property type="term" value="P:lipid A biosynthetic process"/>
    <property type="evidence" value="ECO:0007669"/>
    <property type="project" value="UniProtKB-KW"/>
</dbReference>
<dbReference type="GO" id="GO:0009103">
    <property type="term" value="P:lipopolysaccharide biosynthetic process"/>
    <property type="evidence" value="ECO:0007669"/>
    <property type="project" value="UniProtKB-UniRule"/>
</dbReference>
<dbReference type="GO" id="GO:0046677">
    <property type="term" value="P:response to antibiotic"/>
    <property type="evidence" value="ECO:0007669"/>
    <property type="project" value="UniProtKB-KW"/>
</dbReference>
<dbReference type="CDD" id="cd00616">
    <property type="entry name" value="AHBA_syn"/>
    <property type="match status" value="1"/>
</dbReference>
<dbReference type="FunFam" id="3.40.640.10:FF:000040">
    <property type="entry name" value="UDP-4-amino-4-deoxy-L-arabinose--oxoglutarate aminotransferase"/>
    <property type="match status" value="1"/>
</dbReference>
<dbReference type="FunFam" id="3.90.1150.10:FF:000030">
    <property type="entry name" value="UDP-4-amino-4-deoxy-L-arabinose--oxoglutarate aminotransferase"/>
    <property type="match status" value="1"/>
</dbReference>
<dbReference type="Gene3D" id="3.90.1150.10">
    <property type="entry name" value="Aspartate Aminotransferase, domain 1"/>
    <property type="match status" value="1"/>
</dbReference>
<dbReference type="Gene3D" id="3.40.640.10">
    <property type="entry name" value="Type I PLP-dependent aspartate aminotransferase-like (Major domain)"/>
    <property type="match status" value="1"/>
</dbReference>
<dbReference type="HAMAP" id="MF_01167">
    <property type="entry name" value="ArnB_transfer"/>
    <property type="match status" value="1"/>
</dbReference>
<dbReference type="InterPro" id="IPR022850">
    <property type="entry name" value="ArnB_NH2Trfase"/>
</dbReference>
<dbReference type="InterPro" id="IPR000653">
    <property type="entry name" value="DegT/StrS_aminotransferase"/>
</dbReference>
<dbReference type="InterPro" id="IPR015424">
    <property type="entry name" value="PyrdxlP-dep_Trfase"/>
</dbReference>
<dbReference type="InterPro" id="IPR015421">
    <property type="entry name" value="PyrdxlP-dep_Trfase_major"/>
</dbReference>
<dbReference type="InterPro" id="IPR015422">
    <property type="entry name" value="PyrdxlP-dep_Trfase_small"/>
</dbReference>
<dbReference type="NCBIfam" id="NF008658">
    <property type="entry name" value="PRK11658.1"/>
    <property type="match status" value="1"/>
</dbReference>
<dbReference type="PANTHER" id="PTHR30244">
    <property type="entry name" value="TRANSAMINASE"/>
    <property type="match status" value="1"/>
</dbReference>
<dbReference type="PANTHER" id="PTHR30244:SF41">
    <property type="entry name" value="UDP-4-AMINO-4-DEOXY-L-ARABINOSE--OXOGLUTARATE AMINOTRANSFERASE"/>
    <property type="match status" value="1"/>
</dbReference>
<dbReference type="Pfam" id="PF01041">
    <property type="entry name" value="DegT_DnrJ_EryC1"/>
    <property type="match status" value="1"/>
</dbReference>
<dbReference type="PIRSF" id="PIRSF000390">
    <property type="entry name" value="PLP_StrS"/>
    <property type="match status" value="1"/>
</dbReference>
<dbReference type="SUPFAM" id="SSF53383">
    <property type="entry name" value="PLP-dependent transferases"/>
    <property type="match status" value="1"/>
</dbReference>
<accession>B5XTK7</accession>
<evidence type="ECO:0000255" key="1">
    <source>
        <dbReference type="HAMAP-Rule" id="MF_01167"/>
    </source>
</evidence>
<reference key="1">
    <citation type="journal article" date="2008" name="PLoS Genet.">
        <title>Complete genome sequence of the N2-fixing broad host range endophyte Klebsiella pneumoniae 342 and virulence predictions verified in mice.</title>
        <authorList>
            <person name="Fouts D.E."/>
            <person name="Tyler H.L."/>
            <person name="DeBoy R.T."/>
            <person name="Daugherty S."/>
            <person name="Ren Q."/>
            <person name="Badger J.H."/>
            <person name="Durkin A.S."/>
            <person name="Huot H."/>
            <person name="Shrivastava S."/>
            <person name="Kothari S."/>
            <person name="Dodson R.J."/>
            <person name="Mohamoud Y."/>
            <person name="Khouri H."/>
            <person name="Roesch L.F.W."/>
            <person name="Krogfelt K.A."/>
            <person name="Struve C."/>
            <person name="Triplett E.W."/>
            <person name="Methe B.A."/>
        </authorList>
    </citation>
    <scope>NUCLEOTIDE SEQUENCE [LARGE SCALE GENOMIC DNA]</scope>
    <source>
        <strain>342</strain>
    </source>
</reference>
<sequence>MSDFLPFSRPSMGDAELAALREVLASGWITTGPKNQALEAAFCQLTGNRHAIAVSSATGGMHVTLMALGIGPGDEVITPSQTWVSTLNMICLLGATPVMIDVDNDNLMITPDAVEAAITSRTKAIIPVHYAGAPADIDAIRAVGERHGIPVIEDAAHAAGTHYKGRHIGWQGTAIFSFHAIKNMTCAEGGLIVTDDDELASRIRSLKFHGLGVDAYDRQTHGRAPQAEVITPGFKYNLADINAALALVQLEKLSHANQRRTEIAQRYLRELADTPFKPLTVPAWDHQHAWHLFIIRVDEAACGISRDALMEKLKAMGIGTGLHFRAAHTQKYYRERFPEVSLPNTEWNSARICSLPLFPDMTDDDVTRVISALRQLSGR</sequence>
<proteinExistence type="inferred from homology"/>